<protein>
    <recommendedName>
        <fullName>Bystin</fullName>
    </recommendedName>
</protein>
<dbReference type="EMBL" id="AAFI02000117">
    <property type="protein sequence ID" value="EAL63142.1"/>
    <property type="molecule type" value="Genomic_DNA"/>
</dbReference>
<dbReference type="RefSeq" id="XP_636644.1">
    <property type="nucleotide sequence ID" value="XM_631552.1"/>
</dbReference>
<dbReference type="SMR" id="Q54IS0"/>
<dbReference type="FunCoup" id="Q54IS0">
    <property type="interactions" value="449"/>
</dbReference>
<dbReference type="STRING" id="44689.Q54IS0"/>
<dbReference type="PaxDb" id="44689-DDB0266395"/>
<dbReference type="EnsemblProtists" id="EAL63142">
    <property type="protein sequence ID" value="EAL63142"/>
    <property type="gene ID" value="DDB_G0288565"/>
</dbReference>
<dbReference type="GeneID" id="8626690"/>
<dbReference type="KEGG" id="ddi:DDB_G0288565"/>
<dbReference type="dictyBase" id="DDB_G0288565">
    <property type="gene designation" value="bysl"/>
</dbReference>
<dbReference type="VEuPathDB" id="AmoebaDB:DDB_G0288565"/>
<dbReference type="eggNOG" id="KOG3871">
    <property type="taxonomic scope" value="Eukaryota"/>
</dbReference>
<dbReference type="HOGENOM" id="CLU_029727_0_1_1"/>
<dbReference type="InParanoid" id="Q54IS0"/>
<dbReference type="OMA" id="TKLPVIW"/>
<dbReference type="PhylomeDB" id="Q54IS0"/>
<dbReference type="PRO" id="PR:Q54IS0"/>
<dbReference type="Proteomes" id="UP000002195">
    <property type="component" value="Chromosome 5"/>
</dbReference>
<dbReference type="GO" id="GO:0005737">
    <property type="term" value="C:cytoplasm"/>
    <property type="evidence" value="ECO:0000318"/>
    <property type="project" value="GO_Central"/>
</dbReference>
<dbReference type="GO" id="GO:0005730">
    <property type="term" value="C:nucleolus"/>
    <property type="evidence" value="ECO:0000318"/>
    <property type="project" value="GO_Central"/>
</dbReference>
<dbReference type="GO" id="GO:0030688">
    <property type="term" value="C:preribosome, small subunit precursor"/>
    <property type="evidence" value="ECO:0000318"/>
    <property type="project" value="GO_Central"/>
</dbReference>
<dbReference type="GO" id="GO:0030515">
    <property type="term" value="F:snoRNA binding"/>
    <property type="evidence" value="ECO:0000318"/>
    <property type="project" value="GO_Central"/>
</dbReference>
<dbReference type="GO" id="GO:0006364">
    <property type="term" value="P:rRNA processing"/>
    <property type="evidence" value="ECO:0000318"/>
    <property type="project" value="GO_Central"/>
</dbReference>
<dbReference type="InterPro" id="IPR007955">
    <property type="entry name" value="Bystin"/>
</dbReference>
<dbReference type="PANTHER" id="PTHR12821">
    <property type="entry name" value="BYSTIN"/>
    <property type="match status" value="1"/>
</dbReference>
<dbReference type="PANTHER" id="PTHR12821:SF0">
    <property type="entry name" value="BYSTIN"/>
    <property type="match status" value="1"/>
</dbReference>
<dbReference type="Pfam" id="PF05291">
    <property type="entry name" value="Bystin"/>
    <property type="match status" value="1"/>
</dbReference>
<reference key="1">
    <citation type="journal article" date="2005" name="Nature">
        <title>The genome of the social amoeba Dictyostelium discoideum.</title>
        <authorList>
            <person name="Eichinger L."/>
            <person name="Pachebat J.A."/>
            <person name="Gloeckner G."/>
            <person name="Rajandream M.A."/>
            <person name="Sucgang R."/>
            <person name="Berriman M."/>
            <person name="Song J."/>
            <person name="Olsen R."/>
            <person name="Szafranski K."/>
            <person name="Xu Q."/>
            <person name="Tunggal B."/>
            <person name="Kummerfeld S."/>
            <person name="Madera M."/>
            <person name="Konfortov B.A."/>
            <person name="Rivero F."/>
            <person name="Bankier A.T."/>
            <person name="Lehmann R."/>
            <person name="Hamlin N."/>
            <person name="Davies R."/>
            <person name="Gaudet P."/>
            <person name="Fey P."/>
            <person name="Pilcher K."/>
            <person name="Chen G."/>
            <person name="Saunders D."/>
            <person name="Sodergren E.J."/>
            <person name="Davis P."/>
            <person name="Kerhornou A."/>
            <person name="Nie X."/>
            <person name="Hall N."/>
            <person name="Anjard C."/>
            <person name="Hemphill L."/>
            <person name="Bason N."/>
            <person name="Farbrother P."/>
            <person name="Desany B."/>
            <person name="Just E."/>
            <person name="Morio T."/>
            <person name="Rost R."/>
            <person name="Churcher C.M."/>
            <person name="Cooper J."/>
            <person name="Haydock S."/>
            <person name="van Driessche N."/>
            <person name="Cronin A."/>
            <person name="Goodhead I."/>
            <person name="Muzny D.M."/>
            <person name="Mourier T."/>
            <person name="Pain A."/>
            <person name="Lu M."/>
            <person name="Harper D."/>
            <person name="Lindsay R."/>
            <person name="Hauser H."/>
            <person name="James K.D."/>
            <person name="Quiles M."/>
            <person name="Madan Babu M."/>
            <person name="Saito T."/>
            <person name="Buchrieser C."/>
            <person name="Wardroper A."/>
            <person name="Felder M."/>
            <person name="Thangavelu M."/>
            <person name="Johnson D."/>
            <person name="Knights A."/>
            <person name="Loulseged H."/>
            <person name="Mungall K.L."/>
            <person name="Oliver K."/>
            <person name="Price C."/>
            <person name="Quail M.A."/>
            <person name="Urushihara H."/>
            <person name="Hernandez J."/>
            <person name="Rabbinowitsch E."/>
            <person name="Steffen D."/>
            <person name="Sanders M."/>
            <person name="Ma J."/>
            <person name="Kohara Y."/>
            <person name="Sharp S."/>
            <person name="Simmonds M.N."/>
            <person name="Spiegler S."/>
            <person name="Tivey A."/>
            <person name="Sugano S."/>
            <person name="White B."/>
            <person name="Walker D."/>
            <person name="Woodward J.R."/>
            <person name="Winckler T."/>
            <person name="Tanaka Y."/>
            <person name="Shaulsky G."/>
            <person name="Schleicher M."/>
            <person name="Weinstock G.M."/>
            <person name="Rosenthal A."/>
            <person name="Cox E.C."/>
            <person name="Chisholm R.L."/>
            <person name="Gibbs R.A."/>
            <person name="Loomis W.F."/>
            <person name="Platzer M."/>
            <person name="Kay R.R."/>
            <person name="Williams J.G."/>
            <person name="Dear P.H."/>
            <person name="Noegel A.A."/>
            <person name="Barrell B.G."/>
            <person name="Kuspa A."/>
        </authorList>
    </citation>
    <scope>NUCLEOTIDE SEQUENCE [LARGE SCALE GENOMIC DNA]</scope>
    <source>
        <strain>AX4</strain>
    </source>
</reference>
<keyword id="KW-0539">Nucleus</keyword>
<keyword id="KW-1185">Reference proteome</keyword>
<keyword id="KW-0690">Ribosome biogenesis</keyword>
<comment type="function">
    <text evidence="1">Required for processing of 20S pre-rRNA precursor and biogenesis of 40S ribosomal subunits.</text>
</comment>
<comment type="subcellular location">
    <subcellularLocation>
        <location evidence="1">Nucleus</location>
        <location evidence="1">Nucleolus</location>
    </subcellularLocation>
</comment>
<comment type="similarity">
    <text evidence="3">Belongs to the bystin family.</text>
</comment>
<feature type="chain" id="PRO_0000327726" description="Bystin">
    <location>
        <begin position="1"/>
        <end position="475"/>
    </location>
</feature>
<feature type="region of interest" description="Disordered" evidence="2">
    <location>
        <begin position="1"/>
        <end position="57"/>
    </location>
</feature>
<feature type="region of interest" description="Disordered" evidence="2">
    <location>
        <begin position="106"/>
        <end position="149"/>
    </location>
</feature>
<feature type="compositionally biased region" description="Basic residues" evidence="2">
    <location>
        <begin position="1"/>
        <end position="12"/>
    </location>
</feature>
<feature type="compositionally biased region" description="Basic residues" evidence="2">
    <location>
        <begin position="29"/>
        <end position="41"/>
    </location>
</feature>
<feature type="compositionally biased region" description="Acidic residues" evidence="2">
    <location>
        <begin position="45"/>
        <end position="54"/>
    </location>
</feature>
<feature type="compositionally biased region" description="Acidic residues" evidence="2">
    <location>
        <begin position="107"/>
        <end position="119"/>
    </location>
</feature>
<name>BYST_DICDI</name>
<gene>
    <name type="primary">bysl</name>
    <name type="ORF">DDB_G0288565</name>
</gene>
<evidence type="ECO:0000250" key="1">
    <source>
        <dbReference type="UniProtKB" id="Q13895"/>
    </source>
</evidence>
<evidence type="ECO:0000256" key="2">
    <source>
        <dbReference type="SAM" id="MobiDB-lite"/>
    </source>
</evidence>
<evidence type="ECO:0000305" key="3"/>
<proteinExistence type="inferred from homology"/>
<organism>
    <name type="scientific">Dictyostelium discoideum</name>
    <name type="common">Social amoeba</name>
    <dbReference type="NCBI Taxonomy" id="44689"/>
    <lineage>
        <taxon>Eukaryota</taxon>
        <taxon>Amoebozoa</taxon>
        <taxon>Evosea</taxon>
        <taxon>Eumycetozoa</taxon>
        <taxon>Dictyostelia</taxon>
        <taxon>Dictyosteliales</taxon>
        <taxon>Dictyosteliaceae</taxon>
        <taxon>Dictyostelium</taxon>
    </lineage>
</organism>
<accession>Q54IS0</accession>
<sequence>MGKDVKKVHKLRHDPLSKQIEESESAYQKPHKRVGKLRKKKAEMENDTGIDETESVIPSALSKKILDQIREQAIEVEVEDRKKEKQEKLLTFEQERIQSKLLSFNDFIDDDDDDEDADQDDNKRRSNGNDFDENDGFEQFSDTESQFGVGGEVEIDEEDERVLSMFMGGGGGDGQEQQFQTRFTLGDIIESKLKEHESRQVSSENAINPKVIDVYTKVGKLLETYTSGKIPRAFRILPNFTNWEDLLYLTRPDKWTPHSIRVATKLFCMSTNSKITQRFLSIVVLPRVRDNIAEYKKLNYHLYMALKKSLYRPAAFYKAILLPLAESGDCTLLEAKIIGSVVCKVSIPVLHSSVALMKLSQLTRYNGATSMFIRMLCDKKYALPYRVIDGLVDHFVMFDEEVRELPVLWHRALLSFVQRYKTDITKDQKEKLKIILRKHNHHIITAEIRRELFFSNSRGGVAPSNFTDDTSSMME</sequence>